<feature type="signal peptide">
    <location>
        <begin position="1"/>
        <end position="18"/>
    </location>
</feature>
<feature type="chain" id="PRO_0000015228" description="Ig heavy chain V region 441">
    <location>
        <begin position="19"/>
        <end position="116"/>
    </location>
</feature>
<feature type="domain" description="Ig-like">
    <location>
        <begin position="19"/>
        <end position="116" status="greater than"/>
    </location>
</feature>
<feature type="non-terminal residue">
    <location>
        <position position="116"/>
    </location>
</feature>
<name>HVM36_MOUSE</name>
<keyword id="KW-1064">Adaptive immunity</keyword>
<keyword id="KW-0391">Immunity</keyword>
<keyword id="KW-1280">Immunoglobulin</keyword>
<keyword id="KW-1185">Reference proteome</keyword>
<keyword id="KW-0732">Signal</keyword>
<accession>P01806</accession>
<reference key="1">
    <citation type="journal article" date="1981" name="Nucleic Acids Res.">
        <title>Mouse heavy chain variable regions: nucleotide sequence of a germ-line VH gene segment.</title>
        <authorList>
            <person name="Ollo R."/>
            <person name="Auffray C."/>
            <person name="Sikorav J.-L."/>
            <person name="Rougeon F."/>
        </authorList>
    </citation>
    <scope>NUCLEOTIDE SEQUENCE [GENOMIC DNA]</scope>
</reference>
<proteinExistence type="predicted"/>
<dbReference type="EMBL" id="V00774">
    <property type="protein sequence ID" value="CAA24152.1"/>
    <property type="molecule type" value="Genomic_DNA"/>
</dbReference>
<dbReference type="PIR" id="A02076">
    <property type="entry name" value="HVMS44"/>
</dbReference>
<dbReference type="SMR" id="P01806"/>
<dbReference type="FunCoup" id="P01806">
    <property type="interactions" value="538"/>
</dbReference>
<dbReference type="jPOST" id="P01806"/>
<dbReference type="MGI" id="MGI:96492">
    <property type="gene designation" value="Igh-VX24"/>
</dbReference>
<dbReference type="InParanoid" id="P01806"/>
<dbReference type="PRO" id="PR:P01806"/>
<dbReference type="Proteomes" id="UP000000589">
    <property type="component" value="Unplaced"/>
</dbReference>
<dbReference type="RNAct" id="P01806">
    <property type="molecule type" value="protein"/>
</dbReference>
<dbReference type="GO" id="GO:0005576">
    <property type="term" value="C:extracellular region"/>
    <property type="evidence" value="ECO:0007669"/>
    <property type="project" value="UniProtKB-ARBA"/>
</dbReference>
<dbReference type="GO" id="GO:0019814">
    <property type="term" value="C:immunoglobulin complex"/>
    <property type="evidence" value="ECO:0007669"/>
    <property type="project" value="UniProtKB-KW"/>
</dbReference>
<dbReference type="GO" id="GO:0002250">
    <property type="term" value="P:adaptive immune response"/>
    <property type="evidence" value="ECO:0007669"/>
    <property type="project" value="UniProtKB-KW"/>
</dbReference>
<dbReference type="CDD" id="cd04981">
    <property type="entry name" value="IgV_H"/>
    <property type="match status" value="1"/>
</dbReference>
<dbReference type="FunFam" id="2.60.40.10:FF:001259">
    <property type="entry name" value="Immunoglobulin heavy variable 13-2"/>
    <property type="match status" value="1"/>
</dbReference>
<dbReference type="Gene3D" id="2.60.40.10">
    <property type="entry name" value="Immunoglobulins"/>
    <property type="match status" value="1"/>
</dbReference>
<dbReference type="InterPro" id="IPR007110">
    <property type="entry name" value="Ig-like_dom"/>
</dbReference>
<dbReference type="InterPro" id="IPR036179">
    <property type="entry name" value="Ig-like_dom_sf"/>
</dbReference>
<dbReference type="InterPro" id="IPR013783">
    <property type="entry name" value="Ig-like_fold"/>
</dbReference>
<dbReference type="InterPro" id="IPR013106">
    <property type="entry name" value="Ig_V-set"/>
</dbReference>
<dbReference type="InterPro" id="IPR050199">
    <property type="entry name" value="IgHV"/>
</dbReference>
<dbReference type="PANTHER" id="PTHR23266">
    <property type="entry name" value="IMMUNOGLOBULIN HEAVY CHAIN"/>
    <property type="match status" value="1"/>
</dbReference>
<dbReference type="Pfam" id="PF07686">
    <property type="entry name" value="V-set"/>
    <property type="match status" value="1"/>
</dbReference>
<dbReference type="SMART" id="SM00406">
    <property type="entry name" value="IGv"/>
    <property type="match status" value="1"/>
</dbReference>
<dbReference type="SUPFAM" id="SSF48726">
    <property type="entry name" value="Immunoglobulin"/>
    <property type="match status" value="1"/>
</dbReference>
<dbReference type="PROSITE" id="PS50835">
    <property type="entry name" value="IG_LIKE"/>
    <property type="match status" value="1"/>
</dbReference>
<protein>
    <recommendedName>
        <fullName>Ig heavy chain V region 441</fullName>
    </recommendedName>
</protein>
<organism>
    <name type="scientific">Mus musculus</name>
    <name type="common">Mouse</name>
    <dbReference type="NCBI Taxonomy" id="10090"/>
    <lineage>
        <taxon>Eukaryota</taxon>
        <taxon>Metazoa</taxon>
        <taxon>Chordata</taxon>
        <taxon>Craniata</taxon>
        <taxon>Vertebrata</taxon>
        <taxon>Euteleostomi</taxon>
        <taxon>Mammalia</taxon>
        <taxon>Eutheria</taxon>
        <taxon>Euarchontoglires</taxon>
        <taxon>Glires</taxon>
        <taxon>Rodentia</taxon>
        <taxon>Myomorpha</taxon>
        <taxon>Muroidea</taxon>
        <taxon>Muridae</taxon>
        <taxon>Murinae</taxon>
        <taxon>Mus</taxon>
        <taxon>Mus</taxon>
    </lineage>
</organism>
<sequence>MDFGLIFFIVALLKGVQCEVKLLESGGGLVQPGGSLKLSCAASGFDFSRYWMSWVRQAPGKGLEWIGEINPDSSTINYTPSLKDKFIISRDNAKNTLYLQMSKVRSEDTALYYCAR</sequence>